<accession>B7MD73</accession>
<gene>
    <name evidence="1" type="primary">ribH</name>
    <name type="ordered locus">ECS88_0410</name>
</gene>
<keyword id="KW-1185">Reference proteome</keyword>
<keyword id="KW-0686">Riboflavin biosynthesis</keyword>
<keyword id="KW-0808">Transferase</keyword>
<proteinExistence type="inferred from homology"/>
<protein>
    <recommendedName>
        <fullName evidence="1">6,7-dimethyl-8-ribityllumazine synthase</fullName>
        <shortName evidence="1">DMRL synthase</shortName>
        <shortName evidence="1">LS</shortName>
        <shortName evidence="1">Lumazine synthase</shortName>
        <ecNumber evidence="1">2.5.1.78</ecNumber>
    </recommendedName>
</protein>
<reference key="1">
    <citation type="journal article" date="2009" name="PLoS Genet.">
        <title>Organised genome dynamics in the Escherichia coli species results in highly diverse adaptive paths.</title>
        <authorList>
            <person name="Touchon M."/>
            <person name="Hoede C."/>
            <person name="Tenaillon O."/>
            <person name="Barbe V."/>
            <person name="Baeriswyl S."/>
            <person name="Bidet P."/>
            <person name="Bingen E."/>
            <person name="Bonacorsi S."/>
            <person name="Bouchier C."/>
            <person name="Bouvet O."/>
            <person name="Calteau A."/>
            <person name="Chiapello H."/>
            <person name="Clermont O."/>
            <person name="Cruveiller S."/>
            <person name="Danchin A."/>
            <person name="Diard M."/>
            <person name="Dossat C."/>
            <person name="Karoui M.E."/>
            <person name="Frapy E."/>
            <person name="Garry L."/>
            <person name="Ghigo J.M."/>
            <person name="Gilles A.M."/>
            <person name="Johnson J."/>
            <person name="Le Bouguenec C."/>
            <person name="Lescat M."/>
            <person name="Mangenot S."/>
            <person name="Martinez-Jehanne V."/>
            <person name="Matic I."/>
            <person name="Nassif X."/>
            <person name="Oztas S."/>
            <person name="Petit M.A."/>
            <person name="Pichon C."/>
            <person name="Rouy Z."/>
            <person name="Ruf C.S."/>
            <person name="Schneider D."/>
            <person name="Tourret J."/>
            <person name="Vacherie B."/>
            <person name="Vallenet D."/>
            <person name="Medigue C."/>
            <person name="Rocha E.P.C."/>
            <person name="Denamur E."/>
        </authorList>
    </citation>
    <scope>NUCLEOTIDE SEQUENCE [LARGE SCALE GENOMIC DNA]</scope>
    <source>
        <strain>S88 / ExPEC</strain>
    </source>
</reference>
<sequence>MNIIEANVATPDARVAITIARFNNFINDSLLEGAIDALKRIGQVKDENITIVWVPGAYELPLAAGALAKTGKYDAVIALGTVIRGGTAHFEYVAGGASNGLAHVAQDSEIPVAFGVLTTESIEQAIERAGTKAGNKGAEAALTALEMINVLKAIKA</sequence>
<comment type="function">
    <text evidence="1">Catalyzes the formation of 6,7-dimethyl-8-ribityllumazine by condensation of 5-amino-6-(D-ribitylamino)uracil with 3,4-dihydroxy-2-butanone 4-phosphate. This is the penultimate step in the biosynthesis of riboflavin.</text>
</comment>
<comment type="catalytic activity">
    <reaction evidence="1">
        <text>(2S)-2-hydroxy-3-oxobutyl phosphate + 5-amino-6-(D-ribitylamino)uracil = 6,7-dimethyl-8-(1-D-ribityl)lumazine + phosphate + 2 H2O + H(+)</text>
        <dbReference type="Rhea" id="RHEA:26152"/>
        <dbReference type="ChEBI" id="CHEBI:15377"/>
        <dbReference type="ChEBI" id="CHEBI:15378"/>
        <dbReference type="ChEBI" id="CHEBI:15934"/>
        <dbReference type="ChEBI" id="CHEBI:43474"/>
        <dbReference type="ChEBI" id="CHEBI:58201"/>
        <dbReference type="ChEBI" id="CHEBI:58830"/>
        <dbReference type="EC" id="2.5.1.78"/>
    </reaction>
</comment>
<comment type="pathway">
    <text evidence="1">Cofactor biosynthesis; riboflavin biosynthesis; riboflavin from 2-hydroxy-3-oxobutyl phosphate and 5-amino-6-(D-ribitylamino)uracil: step 1/2.</text>
</comment>
<comment type="subunit">
    <text evidence="1">Forms an icosahedral capsid composed of 60 subunits, arranged as a dodecamer of pentamers.</text>
</comment>
<comment type="similarity">
    <text evidence="1">Belongs to the DMRL synthase family.</text>
</comment>
<feature type="chain" id="PRO_1000195486" description="6,7-dimethyl-8-ribityllumazine synthase">
    <location>
        <begin position="1"/>
        <end position="156"/>
    </location>
</feature>
<feature type="active site" description="Proton donor" evidence="1">
    <location>
        <position position="89"/>
    </location>
</feature>
<feature type="binding site" evidence="1">
    <location>
        <position position="22"/>
    </location>
    <ligand>
        <name>5-amino-6-(D-ribitylamino)uracil</name>
        <dbReference type="ChEBI" id="CHEBI:15934"/>
    </ligand>
</feature>
<feature type="binding site" evidence="1">
    <location>
        <begin position="57"/>
        <end position="59"/>
    </location>
    <ligand>
        <name>5-amino-6-(D-ribitylamino)uracil</name>
        <dbReference type="ChEBI" id="CHEBI:15934"/>
    </ligand>
</feature>
<feature type="binding site" evidence="1">
    <location>
        <begin position="81"/>
        <end position="83"/>
    </location>
    <ligand>
        <name>5-amino-6-(D-ribitylamino)uracil</name>
        <dbReference type="ChEBI" id="CHEBI:15934"/>
    </ligand>
</feature>
<feature type="binding site" evidence="1">
    <location>
        <begin position="86"/>
        <end position="87"/>
    </location>
    <ligand>
        <name>(2S)-2-hydroxy-3-oxobutyl phosphate</name>
        <dbReference type="ChEBI" id="CHEBI:58830"/>
    </ligand>
</feature>
<feature type="binding site" evidence="1">
    <location>
        <position position="114"/>
    </location>
    <ligand>
        <name>5-amino-6-(D-ribitylamino)uracil</name>
        <dbReference type="ChEBI" id="CHEBI:15934"/>
    </ligand>
</feature>
<feature type="binding site" evidence="1">
    <location>
        <position position="128"/>
    </location>
    <ligand>
        <name>(2S)-2-hydroxy-3-oxobutyl phosphate</name>
        <dbReference type="ChEBI" id="CHEBI:58830"/>
    </ligand>
</feature>
<organism>
    <name type="scientific">Escherichia coli O45:K1 (strain S88 / ExPEC)</name>
    <dbReference type="NCBI Taxonomy" id="585035"/>
    <lineage>
        <taxon>Bacteria</taxon>
        <taxon>Pseudomonadati</taxon>
        <taxon>Pseudomonadota</taxon>
        <taxon>Gammaproteobacteria</taxon>
        <taxon>Enterobacterales</taxon>
        <taxon>Enterobacteriaceae</taxon>
        <taxon>Escherichia</taxon>
    </lineage>
</organism>
<evidence type="ECO:0000255" key="1">
    <source>
        <dbReference type="HAMAP-Rule" id="MF_00178"/>
    </source>
</evidence>
<name>RISB_ECO45</name>
<dbReference type="EC" id="2.5.1.78" evidence="1"/>
<dbReference type="EMBL" id="CU928161">
    <property type="protein sequence ID" value="CAR01758.1"/>
    <property type="molecule type" value="Genomic_DNA"/>
</dbReference>
<dbReference type="SMR" id="B7MD73"/>
<dbReference type="KEGG" id="ecz:ECS88_0410"/>
<dbReference type="HOGENOM" id="CLU_089358_1_1_6"/>
<dbReference type="UniPathway" id="UPA00275">
    <property type="reaction ID" value="UER00404"/>
</dbReference>
<dbReference type="Proteomes" id="UP000000747">
    <property type="component" value="Chromosome"/>
</dbReference>
<dbReference type="GO" id="GO:0005829">
    <property type="term" value="C:cytosol"/>
    <property type="evidence" value="ECO:0007669"/>
    <property type="project" value="TreeGrafter"/>
</dbReference>
<dbReference type="GO" id="GO:0009349">
    <property type="term" value="C:riboflavin synthase complex"/>
    <property type="evidence" value="ECO:0007669"/>
    <property type="project" value="InterPro"/>
</dbReference>
<dbReference type="GO" id="GO:0000906">
    <property type="term" value="F:6,7-dimethyl-8-ribityllumazine synthase activity"/>
    <property type="evidence" value="ECO:0007669"/>
    <property type="project" value="UniProtKB-UniRule"/>
</dbReference>
<dbReference type="GO" id="GO:0009231">
    <property type="term" value="P:riboflavin biosynthetic process"/>
    <property type="evidence" value="ECO:0007669"/>
    <property type="project" value="UniProtKB-UniRule"/>
</dbReference>
<dbReference type="CDD" id="cd09209">
    <property type="entry name" value="Lumazine_synthase-I"/>
    <property type="match status" value="1"/>
</dbReference>
<dbReference type="FunFam" id="3.40.50.960:FF:000001">
    <property type="entry name" value="6,7-dimethyl-8-ribityllumazine synthase"/>
    <property type="match status" value="1"/>
</dbReference>
<dbReference type="Gene3D" id="3.40.50.960">
    <property type="entry name" value="Lumazine/riboflavin synthase"/>
    <property type="match status" value="1"/>
</dbReference>
<dbReference type="HAMAP" id="MF_00178">
    <property type="entry name" value="Lumazine_synth"/>
    <property type="match status" value="1"/>
</dbReference>
<dbReference type="InterPro" id="IPR034964">
    <property type="entry name" value="LS"/>
</dbReference>
<dbReference type="InterPro" id="IPR002180">
    <property type="entry name" value="LS/RS"/>
</dbReference>
<dbReference type="InterPro" id="IPR036467">
    <property type="entry name" value="LS/RS_sf"/>
</dbReference>
<dbReference type="NCBIfam" id="TIGR00114">
    <property type="entry name" value="lumazine-synth"/>
    <property type="match status" value="1"/>
</dbReference>
<dbReference type="NCBIfam" id="NF000812">
    <property type="entry name" value="PRK00061.1-4"/>
    <property type="match status" value="1"/>
</dbReference>
<dbReference type="PANTHER" id="PTHR21058:SF0">
    <property type="entry name" value="6,7-DIMETHYL-8-RIBITYLLUMAZINE SYNTHASE"/>
    <property type="match status" value="1"/>
</dbReference>
<dbReference type="PANTHER" id="PTHR21058">
    <property type="entry name" value="6,7-DIMETHYL-8-RIBITYLLUMAZINE SYNTHASE DMRL SYNTHASE LUMAZINE SYNTHASE"/>
    <property type="match status" value="1"/>
</dbReference>
<dbReference type="Pfam" id="PF00885">
    <property type="entry name" value="DMRL_synthase"/>
    <property type="match status" value="1"/>
</dbReference>
<dbReference type="SUPFAM" id="SSF52121">
    <property type="entry name" value="Lumazine synthase"/>
    <property type="match status" value="1"/>
</dbReference>